<dbReference type="EMBL" id="CP000247">
    <property type="protein sequence ID" value="ABG68049.1"/>
    <property type="molecule type" value="Genomic_DNA"/>
</dbReference>
<dbReference type="RefSeq" id="WP_000906188.1">
    <property type="nucleotide sequence ID" value="NC_008253.1"/>
</dbReference>
<dbReference type="SMR" id="Q0TLY2"/>
<dbReference type="KEGG" id="ecp:ECP_0007"/>
<dbReference type="HOGENOM" id="CLU_061989_0_0_6"/>
<dbReference type="Proteomes" id="UP000009182">
    <property type="component" value="Chromosome"/>
</dbReference>
<dbReference type="GO" id="GO:0005829">
    <property type="term" value="C:cytosol"/>
    <property type="evidence" value="ECO:0007669"/>
    <property type="project" value="TreeGrafter"/>
</dbReference>
<dbReference type="GO" id="GO:0033194">
    <property type="term" value="P:response to hydroperoxide"/>
    <property type="evidence" value="ECO:0007669"/>
    <property type="project" value="TreeGrafter"/>
</dbReference>
<dbReference type="HAMAP" id="MF_00652">
    <property type="entry name" value="UPF0246"/>
    <property type="match status" value="1"/>
</dbReference>
<dbReference type="InterPro" id="IPR005583">
    <property type="entry name" value="YaaA"/>
</dbReference>
<dbReference type="NCBIfam" id="NF002541">
    <property type="entry name" value="PRK02101.1-1"/>
    <property type="match status" value="1"/>
</dbReference>
<dbReference type="NCBIfam" id="NF002542">
    <property type="entry name" value="PRK02101.1-3"/>
    <property type="match status" value="1"/>
</dbReference>
<dbReference type="PANTHER" id="PTHR30283:SF4">
    <property type="entry name" value="PEROXIDE STRESS RESISTANCE PROTEIN YAAA"/>
    <property type="match status" value="1"/>
</dbReference>
<dbReference type="PANTHER" id="PTHR30283">
    <property type="entry name" value="PEROXIDE STRESS RESPONSE PROTEIN YAAA"/>
    <property type="match status" value="1"/>
</dbReference>
<dbReference type="Pfam" id="PF03883">
    <property type="entry name" value="H2O2_YaaD"/>
    <property type="match status" value="1"/>
</dbReference>
<comment type="similarity">
    <text evidence="1">Belongs to the UPF0246 family.</text>
</comment>
<sequence length="258" mass="29569">MLILISPAKTLDYQSPLTTTRYTLPELLDNAQQLIHEARKLTPPQISSLMRISDKLAGINAARFHDWQPNFTPENARQAILAFKGDVYTGLQAETFSEDDFDFAQQHLRMLSGLYGVLRPLDLMQPYRLEMGIRLENARGKDLYQFWGDIITNKLNEALAAQGDNVVINLASDEYFKSVKPKKLNAEIIKPVFLDEKNGKFKIISFYAKKARGLMSRFIIENRLTKPEQLTGFNSEGYFFDEASSSNGELVFKRYEQR</sequence>
<accession>Q0TLY2</accession>
<evidence type="ECO:0000255" key="1">
    <source>
        <dbReference type="HAMAP-Rule" id="MF_00652"/>
    </source>
</evidence>
<protein>
    <recommendedName>
        <fullName evidence="1">UPF0246 protein YaaA</fullName>
    </recommendedName>
</protein>
<name>YAAA_ECOL5</name>
<gene>
    <name evidence="1" type="primary">yaaA</name>
    <name type="ordered locus">ECP_0007</name>
</gene>
<proteinExistence type="inferred from homology"/>
<reference key="1">
    <citation type="journal article" date="2006" name="Mol. Microbiol.">
        <title>Role of pathogenicity island-associated integrases in the genome plasticity of uropathogenic Escherichia coli strain 536.</title>
        <authorList>
            <person name="Hochhut B."/>
            <person name="Wilde C."/>
            <person name="Balling G."/>
            <person name="Middendorf B."/>
            <person name="Dobrindt U."/>
            <person name="Brzuszkiewicz E."/>
            <person name="Gottschalk G."/>
            <person name="Carniel E."/>
            <person name="Hacker J."/>
        </authorList>
    </citation>
    <scope>NUCLEOTIDE SEQUENCE [LARGE SCALE GENOMIC DNA]</scope>
    <source>
        <strain>536 / UPEC</strain>
    </source>
</reference>
<feature type="chain" id="PRO_0000262016" description="UPF0246 protein YaaA">
    <location>
        <begin position="1"/>
        <end position="258"/>
    </location>
</feature>
<organism>
    <name type="scientific">Escherichia coli O6:K15:H31 (strain 536 / UPEC)</name>
    <dbReference type="NCBI Taxonomy" id="362663"/>
    <lineage>
        <taxon>Bacteria</taxon>
        <taxon>Pseudomonadati</taxon>
        <taxon>Pseudomonadota</taxon>
        <taxon>Gammaproteobacteria</taxon>
        <taxon>Enterobacterales</taxon>
        <taxon>Enterobacteriaceae</taxon>
        <taxon>Escherichia</taxon>
    </lineage>
</organism>